<gene>
    <name evidence="1" type="primary">pfp</name>
    <name type="ordered locus">MEALZ_3302</name>
</gene>
<feature type="chain" id="PRO_0000429706" description="Pyrophosphate--fructose 6-phosphate 1-phosphotransferase">
    <location>
        <begin position="1"/>
        <end position="409"/>
    </location>
</feature>
<feature type="active site" description="Proton acceptor" evidence="1">
    <location>
        <position position="153"/>
    </location>
</feature>
<feature type="binding site" evidence="1">
    <location>
        <position position="14"/>
    </location>
    <ligand>
        <name>diphosphate</name>
        <dbReference type="ChEBI" id="CHEBI:33019"/>
    </ligand>
</feature>
<feature type="binding site" evidence="1">
    <location>
        <position position="123"/>
    </location>
    <ligand>
        <name>Mg(2+)</name>
        <dbReference type="ChEBI" id="CHEBI:18420"/>
        <note>catalytic</note>
    </ligand>
</feature>
<feature type="binding site" evidence="1">
    <location>
        <begin position="151"/>
        <end position="153"/>
    </location>
    <ligand>
        <name>substrate</name>
    </ligand>
</feature>
<feature type="binding site" evidence="1">
    <location>
        <begin position="196"/>
        <end position="198"/>
    </location>
    <ligand>
        <name>substrate</name>
    </ligand>
</feature>
<feature type="binding site" evidence="1">
    <location>
        <position position="268"/>
    </location>
    <ligand>
        <name>substrate</name>
    </ligand>
</feature>
<feature type="binding site" evidence="1">
    <location>
        <begin position="325"/>
        <end position="328"/>
    </location>
    <ligand>
        <name>substrate</name>
    </ligand>
</feature>
<feature type="site" description="Important for catalytic activity and substrate specificity; stabilizes the transition state when the phosphoryl donor is PPi; prevents ATP from binding by mimicking the alpha-phosphate group of ATP" evidence="1">
    <location>
        <position position="124"/>
    </location>
</feature>
<feature type="site" description="Important for catalytic activity; stabilizes the transition state when the phosphoryl donor is PPi" evidence="1">
    <location>
        <position position="150"/>
    </location>
</feature>
<comment type="function">
    <text evidence="1 2">Catalyzes the phosphorylation of D-fructose 6-phosphate, the first committing step of glycolysis. Uses inorganic phosphate (PPi) as phosphoryl donor instead of ATP like common ATP-dependent phosphofructokinases (ATP-PFKs), which renders the reaction reversible, and can thus function both in glycolysis and gluconeogenesis. Consistently, PPi-PFK can replace the enzymes of both the forward (ATP-PFK) and reverse (fructose-bisphosphatase (FBPase)) reactions.</text>
</comment>
<comment type="catalytic activity">
    <reaction evidence="1 2">
        <text>beta-D-fructose 6-phosphate + diphosphate = beta-D-fructose 1,6-bisphosphate + phosphate + H(+)</text>
        <dbReference type="Rhea" id="RHEA:13613"/>
        <dbReference type="ChEBI" id="CHEBI:15378"/>
        <dbReference type="ChEBI" id="CHEBI:32966"/>
        <dbReference type="ChEBI" id="CHEBI:33019"/>
        <dbReference type="ChEBI" id="CHEBI:43474"/>
        <dbReference type="ChEBI" id="CHEBI:57634"/>
        <dbReference type="EC" id="2.7.1.90"/>
    </reaction>
</comment>
<comment type="cofactor">
    <cofactor evidence="1 2">
        <name>Mg(2+)</name>
        <dbReference type="ChEBI" id="CHEBI:18420"/>
    </cofactor>
</comment>
<comment type="activity regulation">
    <text evidence="1 2">Non-allosteric.</text>
</comment>
<comment type="biophysicochemical properties">
    <kinetics>
        <KM evidence="2">3.4 mM for phosphate</KM>
        <KM evidence="2">0.118 mM for diphosphate</KM>
        <KM evidence="2">0.64 mM for fructose 6-phosphate</KM>
        <KM evidence="2">0.095 mM for fructose 1,6-bisphosphate</KM>
        <KM evidence="2">1.01 mM for sedoheptulose-7-phosphate</KM>
        <Vmax evidence="2">577.0 umol/min/mg enzyme for the forward reaction</Vmax>
        <Vmax evidence="2">805.0 umol/min/mg enzyme for the reverse reaction</Vmax>
    </kinetics>
    <phDependence>
        <text evidence="2">Optimum pH is 7.5.</text>
    </phDependence>
    <temperatureDependence>
        <text evidence="2">Optimum temperature is 30 degrees Celsius.</text>
    </temperatureDependence>
</comment>
<comment type="pathway">
    <text evidence="1">Carbohydrate degradation; glycolysis; D-glyceraldehyde 3-phosphate and glycerone phosphate from D-glucose: step 3/4.</text>
</comment>
<comment type="subunit">
    <text evidence="2">Homotetramer.</text>
</comment>
<comment type="subcellular location">
    <subcellularLocation>
        <location evidence="1">Cytoplasm</location>
    </subcellularLocation>
</comment>
<comment type="similarity">
    <text evidence="1">Belongs to the phosphofructokinase type A (PFKA) family. PPi-dependent PFK group II subfamily. Clade 'P' sub-subfamily.</text>
</comment>
<reference key="1">
    <citation type="journal article" date="2012" name="J. Bacteriol.">
        <title>Genome sequence of the haloalkaliphilic methanotrophic bacterium Methylomicrobium alcaliphilum 20Z.</title>
        <authorList>
            <person name="Vuilleumier S."/>
            <person name="Khmelenina V.N."/>
            <person name="Bringel F."/>
            <person name="Reshetnikov A.S."/>
            <person name="Lajus A."/>
            <person name="Mangenot S."/>
            <person name="Rouy Z."/>
            <person name="Op den Camp H.J."/>
            <person name="Jetten M.S."/>
            <person name="Dispirito A.A."/>
            <person name="Dunfield P."/>
            <person name="Klotz M.G."/>
            <person name="Semrau J.D."/>
            <person name="Stein L.Y."/>
            <person name="Barbe V."/>
            <person name="Medigue C."/>
            <person name="Trotsenko Y.A."/>
            <person name="Kalyuzhnaya M.G."/>
        </authorList>
    </citation>
    <scope>NUCLEOTIDE SEQUENCE [LARGE SCALE GENOMIC DNA]</scope>
    <source>
        <strain>DSM 19304 / NCIMB 14124 / VKM B-2133 / 20Z</strain>
    </source>
</reference>
<reference key="2">
    <citation type="journal article" date="2010" name="Res. Microbiol.">
        <title>Characterization of recombinant pyrophosphate-dependent 6-phosphofructokinase from halotolerant methanotroph Methylomicrobium alcaliphilum 20Z.</title>
        <authorList>
            <person name="Rozova O.N."/>
            <person name="Khmelenina V.N."/>
            <person name="Vuilleumier S."/>
            <person name="Trotsenko Y.A."/>
        </authorList>
    </citation>
    <scope>FUNCTION</scope>
    <scope>CATALYTIC ACTIVITY</scope>
    <scope>BIOPHYSICOCHEMICAL PROPERTIES</scope>
    <scope>SUBUNIT</scope>
    <scope>ACTIVITY REGULATION</scope>
    <scope>COFACTOR</scope>
    <source>
        <strain>DSM 19304 / NCIMB 14124 / VKM B-2133 / 20Z</strain>
    </source>
</reference>
<keyword id="KW-0963">Cytoplasm</keyword>
<keyword id="KW-0324">Glycolysis</keyword>
<keyword id="KW-0418">Kinase</keyword>
<keyword id="KW-0460">Magnesium</keyword>
<keyword id="KW-0479">Metal-binding</keyword>
<keyword id="KW-1185">Reference proteome</keyword>
<keyword id="KW-0808">Transferase</keyword>
<protein>
    <recommendedName>
        <fullName evidence="1">Pyrophosphate--fructose 6-phosphate 1-phosphotransferase</fullName>
        <ecNumber evidence="1">2.7.1.90</ecNumber>
    </recommendedName>
    <alternativeName>
        <fullName evidence="1">6-phosphofructokinase, pyrophosphate dependent</fullName>
    </alternativeName>
    <alternativeName>
        <fullName evidence="1">PPi-dependent phosphofructokinase</fullName>
        <shortName evidence="1">PPi-PFK</shortName>
    </alternativeName>
    <alternativeName>
        <fullName evidence="1">Pyrophosphate-dependent 6-phosphofructose-1-kinase</fullName>
    </alternativeName>
</protein>
<organism>
    <name type="scientific">Methylotuvimicrobium alcaliphilum (strain DSM 19304 / NCIMB 14124 / VKM B-2133 / 20Z)</name>
    <name type="common">Methylomicrobium alcaliphilum</name>
    <dbReference type="NCBI Taxonomy" id="1091494"/>
    <lineage>
        <taxon>Bacteria</taxon>
        <taxon>Pseudomonadati</taxon>
        <taxon>Pseudomonadota</taxon>
        <taxon>Gammaproteobacteria</taxon>
        <taxon>Methylococcales</taxon>
        <taxon>Methylococcaceae</taxon>
        <taxon>Methylotuvimicrobium</taxon>
    </lineage>
</organism>
<accession>G4STG9</accession>
<evidence type="ECO:0000255" key="1">
    <source>
        <dbReference type="HAMAP-Rule" id="MF_01977"/>
    </source>
</evidence>
<evidence type="ECO:0000269" key="2">
    <source>
    </source>
</evidence>
<dbReference type="EC" id="2.7.1.90" evidence="1"/>
<dbReference type="EMBL" id="FO082060">
    <property type="protein sequence ID" value="CCE24967.1"/>
    <property type="molecule type" value="Genomic_DNA"/>
</dbReference>
<dbReference type="RefSeq" id="WP_014149724.1">
    <property type="nucleotide sequence ID" value="NC_016112.1"/>
</dbReference>
<dbReference type="SMR" id="G4STG9"/>
<dbReference type="STRING" id="1091494.MEALZ_3302"/>
<dbReference type="KEGG" id="mah:MEALZ_3302"/>
<dbReference type="PATRIC" id="fig|271065.3.peg.3401"/>
<dbReference type="HOGENOM" id="CLU_643544_0_0_6"/>
<dbReference type="UniPathway" id="UPA00109">
    <property type="reaction ID" value="UER00182"/>
</dbReference>
<dbReference type="Proteomes" id="UP000008315">
    <property type="component" value="Chromosome"/>
</dbReference>
<dbReference type="GO" id="GO:0005737">
    <property type="term" value="C:cytoplasm"/>
    <property type="evidence" value="ECO:0007669"/>
    <property type="project" value="UniProtKB-SubCell"/>
</dbReference>
<dbReference type="GO" id="GO:0003872">
    <property type="term" value="F:6-phosphofructokinase activity"/>
    <property type="evidence" value="ECO:0007669"/>
    <property type="project" value="UniProtKB-UniRule"/>
</dbReference>
<dbReference type="GO" id="GO:0047334">
    <property type="term" value="F:diphosphate-fructose-6-phosphate 1-phosphotransferase activity"/>
    <property type="evidence" value="ECO:0007669"/>
    <property type="project" value="UniProtKB-EC"/>
</dbReference>
<dbReference type="GO" id="GO:0046872">
    <property type="term" value="F:metal ion binding"/>
    <property type="evidence" value="ECO:0007669"/>
    <property type="project" value="UniProtKB-KW"/>
</dbReference>
<dbReference type="GO" id="GO:0006002">
    <property type="term" value="P:fructose 6-phosphate metabolic process"/>
    <property type="evidence" value="ECO:0007669"/>
    <property type="project" value="InterPro"/>
</dbReference>
<dbReference type="Gene3D" id="3.40.50.450">
    <property type="match status" value="1"/>
</dbReference>
<dbReference type="HAMAP" id="MF_01977">
    <property type="entry name" value="Phosphofructokinase_II_P"/>
    <property type="match status" value="1"/>
</dbReference>
<dbReference type="InterPro" id="IPR022953">
    <property type="entry name" value="ATP_PFK"/>
</dbReference>
<dbReference type="InterPro" id="IPR050929">
    <property type="entry name" value="PFKA"/>
</dbReference>
<dbReference type="InterPro" id="IPR000023">
    <property type="entry name" value="Phosphofructokinase_dom"/>
</dbReference>
<dbReference type="InterPro" id="IPR035966">
    <property type="entry name" value="PKF_sf"/>
</dbReference>
<dbReference type="InterPro" id="IPR011405">
    <property type="entry name" value="PPi-PFK_SMc01852"/>
</dbReference>
<dbReference type="NCBIfam" id="NF005121">
    <property type="entry name" value="PRK06555.1"/>
    <property type="match status" value="1"/>
</dbReference>
<dbReference type="PANTHER" id="PTHR45770">
    <property type="entry name" value="ATP-DEPENDENT 6-PHOSPHOFRUCTOKINASE 1"/>
    <property type="match status" value="1"/>
</dbReference>
<dbReference type="Pfam" id="PF00365">
    <property type="entry name" value="PFK"/>
    <property type="match status" value="1"/>
</dbReference>
<dbReference type="PIRSF" id="PIRSF036484">
    <property type="entry name" value="PPi-PFK_SMc01852"/>
    <property type="match status" value="1"/>
</dbReference>
<dbReference type="PRINTS" id="PR00476">
    <property type="entry name" value="PHFRCTKINASE"/>
</dbReference>
<dbReference type="SUPFAM" id="SSF53784">
    <property type="entry name" value="Phosphofructokinase"/>
    <property type="match status" value="1"/>
</dbReference>
<name>PFP_META2</name>
<sequence length="409" mass="44437">MNKPKKVAILTAGGLAPCLSSAIGSLIERYTEIDPSIEIICYRSGYKGLLLGDSYAVTPKIRENAALLHKFGGSPIGNSRVKLTNVKDCIKRGLVQEGQDPQKVAADQLVKDGVDVLHTIGGDDTNTAAADLAAFLAKNDYGLTVIGLPKTIDNDVFPIKQSLGAWTAAEQGAQYFQNVVAEYNANPRMLIVHEVMGRNCGWLTAATAMEYRKLLDRSEWLPEIGLDRAAYEVHGVFVPEMEIDLAAEAKRLREVMDKVDCVNIFVSEGAGVDAIVAEMQAKGQEVPRDAFGHIKLDAVNPGKWFGEQFAEMIGAEKTLIQKSGYFARASASNVDDIRLIKSCADLAVECAFRRESGVIGHDEDNGNVLRAIEFPRIKGGKPFDIDTPWFVQMLAGIGQSKGARVEVSH</sequence>
<proteinExistence type="evidence at protein level"/>